<organismHost>
    <name type="scientific">Bacillus subtilis</name>
    <dbReference type="NCBI Taxonomy" id="1423"/>
</organismHost>
<accession>P07541</accession>
<protein>
    <recommendedName>
        <fullName evidence="1">DNA packaging protein</fullName>
    </recommendedName>
    <alternativeName>
        <fullName evidence="1">ATPase gp16</fullName>
        <ecNumber evidence="1">3.6.4.-</ecNumber>
    </alternativeName>
    <alternativeName>
        <fullName>Gene product 16</fullName>
        <shortName>gp16</shortName>
    </alternativeName>
    <alternativeName>
        <fullName>Protein p16</fullName>
    </alternativeName>
</protein>
<feature type="chain" id="PRO_0000106602" description="DNA packaging protein">
    <location>
        <begin position="1"/>
        <end position="332"/>
    </location>
</feature>
<feature type="region of interest" description="ATPase" evidence="1">
    <location>
        <begin position="1"/>
        <end position="207"/>
    </location>
</feature>
<feature type="region of interest" description="DNA-binding" evidence="1">
    <location>
        <begin position="233"/>
        <end position="332"/>
    </location>
</feature>
<feature type="binding site" evidence="2">
    <location>
        <begin position="24"/>
        <end position="31"/>
    </location>
    <ligand>
        <name>ATP</name>
        <dbReference type="ChEBI" id="CHEBI:30616"/>
    </ligand>
</feature>
<comment type="function">
    <text evidence="1">ATPase required for the genome encapsidation reaction. Part of the active packaging motor via the binding to the packaging RNA (pRNA), itself fixed to the head-tail connector at the unique portal vertex of the prohead. Binds and supercoils the pre-formed, unit-length DNA bound to gp3 to produce an initiation complex for DNA packaging. Provides the energy to actively pump the viral DNA into the prohead. Approximately one molecule of ATP is used in the packaging of 2 bp of viral DNA. ATP hydrolysis results in a conformational change that causes the arginine/lysine finger of one subunit to move into the active site of its neighbor, where it interacts with the negatively charged oxygens on the gamma-phosphate of ATP. After packaging, the ATPase and the pRNA are released from the prohead.</text>
</comment>
<comment type="catalytic activity">
    <reaction evidence="1">
        <text>ATP + H2O = ADP + phosphate + H(+)</text>
        <dbReference type="Rhea" id="RHEA:13065"/>
        <dbReference type="ChEBI" id="CHEBI:15377"/>
        <dbReference type="ChEBI" id="CHEBI:15378"/>
        <dbReference type="ChEBI" id="CHEBI:30616"/>
        <dbReference type="ChEBI" id="CHEBI:43474"/>
        <dbReference type="ChEBI" id="CHEBI:456216"/>
    </reaction>
</comment>
<comment type="subunit">
    <text evidence="1">Homopentamer. Interacts with the packaging RNA (pRNA). Part of a DNA-gp3-gp16 complex.</text>
</comment>
<comment type="domain">
    <text evidence="1">The N-terminus contains the ATPase activity and the C-terminus (CTD) binds DNA. The CTD is likely a vestigial nuclease that has lost its hydrolytic capability since Phi-29 is not a concatamer that neads cleavage.</text>
</comment>
<comment type="similarity">
    <text evidence="3">Belongs to the phi29likevirus gp16 family.</text>
</comment>
<reference key="1">
    <citation type="journal article" date="1986" name="Gene">
        <title>Nucleotide sequence of the late region of Bacillus subtilis phage PZA, a close relative of phi 29.</title>
        <authorList>
            <person name="Paces V."/>
            <person name="Vlcek C."/>
            <person name="Urbanek P."/>
        </authorList>
    </citation>
    <scope>NUCLEOTIDE SEQUENCE [GENOMIC DNA]</scope>
</reference>
<gene>
    <name type="primary">16</name>
</gene>
<keyword id="KW-0067">ATP-binding</keyword>
<keyword id="KW-0378">Hydrolase</keyword>
<keyword id="KW-0426">Late protein</keyword>
<keyword id="KW-0547">Nucleotide-binding</keyword>
<keyword id="KW-0231">Viral genome packaging</keyword>
<keyword id="KW-1188">Viral release from host cell</keyword>
<name>PKG16_BPPZA</name>
<dbReference type="EC" id="3.6.4.-" evidence="1"/>
<dbReference type="EMBL" id="M11813">
    <property type="protein sequence ID" value="AAA88493.1"/>
    <property type="molecule type" value="Genomic_DNA"/>
</dbReference>
<dbReference type="PIR" id="B26215">
    <property type="entry name" value="WMBP16"/>
</dbReference>
<dbReference type="SMR" id="P07541"/>
<dbReference type="Proteomes" id="UP000000855">
    <property type="component" value="Segment"/>
</dbReference>
<dbReference type="GO" id="GO:0005524">
    <property type="term" value="F:ATP binding"/>
    <property type="evidence" value="ECO:0007669"/>
    <property type="project" value="UniProtKB-KW"/>
</dbReference>
<dbReference type="GO" id="GO:0016887">
    <property type="term" value="F:ATP hydrolysis activity"/>
    <property type="evidence" value="ECO:0007669"/>
    <property type="project" value="RHEA"/>
</dbReference>
<dbReference type="InterPro" id="IPR027417">
    <property type="entry name" value="P-loop_NTPase"/>
</dbReference>
<dbReference type="InterPro" id="IPR008784">
    <property type="entry name" value="Podovirus_Gp16"/>
</dbReference>
<dbReference type="Pfam" id="PF05894">
    <property type="entry name" value="Podovirus_Gp16"/>
    <property type="match status" value="1"/>
</dbReference>
<dbReference type="SUPFAM" id="SSF52540">
    <property type="entry name" value="P-loop containing nucleoside triphosphate hydrolases"/>
    <property type="match status" value="1"/>
</dbReference>
<organism>
    <name type="scientific">Bacillus phage PZA</name>
    <name type="common">Bacteriophage PZA</name>
    <dbReference type="NCBI Taxonomy" id="10757"/>
    <lineage>
        <taxon>Viruses</taxon>
        <taxon>Duplodnaviria</taxon>
        <taxon>Heunggongvirae</taxon>
        <taxon>Uroviricota</taxon>
        <taxon>Caudoviricetes</taxon>
        <taxon>Salasmaviridae</taxon>
        <taxon>Picovirinae</taxon>
        <taxon>Salasvirus</taxon>
        <taxon>Salasvirus PZA</taxon>
    </lineage>
</organism>
<sequence>MDKSLFYNPQKMLSYDRILNFVIGARGIGKSYAMKVYPINRFIKYGEQFIYVRRYKPELAKVSNYFNDVAQEFPDHELVVKGRRFYIDGKLAGWAIPLSVWQSEKSNAYPNVSTIVFDEFIREKDNSNYIPNEVSALLNLMDTVFRNRERVRCICLSNAVSVVNPYFLFFNLVPDVNKRFNVYDDALIEIPDSLDFSSERRKTRFGRLIDGTEYGEMSLDNQFIGDSHVFIEKRSKDSKFVFSIVYNGFTLGVWVDVNQGLMYVDTAHDPSTKNVYTLTTDDLNENMMLITNYKNNYHLRKLASAFMNGYLRFDNQVIRNIAYELFRKMRIQ</sequence>
<evidence type="ECO:0000250" key="1">
    <source>
        <dbReference type="UniProtKB" id="P11014"/>
    </source>
</evidence>
<evidence type="ECO:0000255" key="2"/>
<evidence type="ECO:0000305" key="3"/>
<proteinExistence type="inferred from homology"/>